<reference key="1">
    <citation type="submission" date="2008-08" db="EMBL/GenBank/DDBJ databases">
        <title>Complete sequence of Vibrio fischeri strain MJ11.</title>
        <authorList>
            <person name="Mandel M.J."/>
            <person name="Stabb E.V."/>
            <person name="Ruby E.G."/>
            <person name="Ferriera S."/>
            <person name="Johnson J."/>
            <person name="Kravitz S."/>
            <person name="Beeson K."/>
            <person name="Sutton G."/>
            <person name="Rogers Y.-H."/>
            <person name="Friedman R."/>
            <person name="Frazier M."/>
            <person name="Venter J.C."/>
        </authorList>
    </citation>
    <scope>NUCLEOTIDE SEQUENCE [LARGE SCALE GENOMIC DNA]</scope>
    <source>
        <strain>MJ11</strain>
    </source>
</reference>
<comment type="function">
    <text evidence="1">One of the primary rRNA binding proteins. Required for association of the 30S and 50S subunits to form the 70S ribosome, for tRNA binding and peptide bond formation. It has been suggested to have peptidyltransferase activity; this is somewhat controversial. Makes several contacts with the 16S rRNA in the 70S ribosome.</text>
</comment>
<comment type="subunit">
    <text evidence="1">Part of the 50S ribosomal subunit. Forms a bridge to the 30S subunit in the 70S ribosome.</text>
</comment>
<comment type="similarity">
    <text evidence="1">Belongs to the universal ribosomal protein uL2 family.</text>
</comment>
<feature type="chain" id="PRO_1000141638" description="Large ribosomal subunit protein uL2">
    <location>
        <begin position="1"/>
        <end position="274"/>
    </location>
</feature>
<feature type="region of interest" description="Disordered" evidence="2">
    <location>
        <begin position="223"/>
        <end position="274"/>
    </location>
</feature>
<accession>B5FG12</accession>
<keyword id="KW-0687">Ribonucleoprotein</keyword>
<keyword id="KW-0689">Ribosomal protein</keyword>
<keyword id="KW-0694">RNA-binding</keyword>
<keyword id="KW-0699">rRNA-binding</keyword>
<sequence length="274" mass="29828">MAIVKCKPTSPGRRHVVKIVNADLHKGKPYAPLLEKNSKNGGRNNNGRITVRHVGGGHKQHYRLIDFKRTKDGIPAVVERLEYDPNRSANIALVLFADGERRYIIAPKGIQAGDTVQSGVDAPIKAGNCLPLRNIPVGSTVHCVELKPGKGAQIARSAGAYAQIIARDGAYVTLRLRSGEMRKVLSEGRATIGEVGNSEHMLRELGKAGATRWRGVRPTVRGVAMNPVDHPHGGGEGRTSGGRHPVSPWGMPTKGFKTRKNKSTDKYIVRRRNK</sequence>
<protein>
    <recommendedName>
        <fullName evidence="1">Large ribosomal subunit protein uL2</fullName>
    </recommendedName>
    <alternativeName>
        <fullName evidence="3">50S ribosomal protein L2</fullName>
    </alternativeName>
</protein>
<gene>
    <name evidence="1" type="primary">rplB</name>
    <name type="ordered locus">VFMJ11_0228</name>
</gene>
<evidence type="ECO:0000255" key="1">
    <source>
        <dbReference type="HAMAP-Rule" id="MF_01320"/>
    </source>
</evidence>
<evidence type="ECO:0000256" key="2">
    <source>
        <dbReference type="SAM" id="MobiDB-lite"/>
    </source>
</evidence>
<evidence type="ECO:0000305" key="3"/>
<organism>
    <name type="scientific">Aliivibrio fischeri (strain MJ11)</name>
    <name type="common">Vibrio fischeri</name>
    <dbReference type="NCBI Taxonomy" id="388396"/>
    <lineage>
        <taxon>Bacteria</taxon>
        <taxon>Pseudomonadati</taxon>
        <taxon>Pseudomonadota</taxon>
        <taxon>Gammaproteobacteria</taxon>
        <taxon>Vibrionales</taxon>
        <taxon>Vibrionaceae</taxon>
        <taxon>Aliivibrio</taxon>
    </lineage>
</organism>
<name>RL2_ALIFM</name>
<proteinExistence type="inferred from homology"/>
<dbReference type="EMBL" id="CP001139">
    <property type="protein sequence ID" value="ACH64853.1"/>
    <property type="molecule type" value="Genomic_DNA"/>
</dbReference>
<dbReference type="RefSeq" id="WP_005417230.1">
    <property type="nucleotide sequence ID" value="NC_011184.1"/>
</dbReference>
<dbReference type="SMR" id="B5FG12"/>
<dbReference type="GeneID" id="54162861"/>
<dbReference type="KEGG" id="vfm:VFMJ11_0228"/>
<dbReference type="HOGENOM" id="CLU_036235_2_1_6"/>
<dbReference type="Proteomes" id="UP000001857">
    <property type="component" value="Chromosome I"/>
</dbReference>
<dbReference type="GO" id="GO:0015934">
    <property type="term" value="C:large ribosomal subunit"/>
    <property type="evidence" value="ECO:0007669"/>
    <property type="project" value="InterPro"/>
</dbReference>
<dbReference type="GO" id="GO:0019843">
    <property type="term" value="F:rRNA binding"/>
    <property type="evidence" value="ECO:0007669"/>
    <property type="project" value="UniProtKB-UniRule"/>
</dbReference>
<dbReference type="GO" id="GO:0003735">
    <property type="term" value="F:structural constituent of ribosome"/>
    <property type="evidence" value="ECO:0007669"/>
    <property type="project" value="InterPro"/>
</dbReference>
<dbReference type="GO" id="GO:0016740">
    <property type="term" value="F:transferase activity"/>
    <property type="evidence" value="ECO:0007669"/>
    <property type="project" value="InterPro"/>
</dbReference>
<dbReference type="GO" id="GO:0002181">
    <property type="term" value="P:cytoplasmic translation"/>
    <property type="evidence" value="ECO:0007669"/>
    <property type="project" value="TreeGrafter"/>
</dbReference>
<dbReference type="FunFam" id="2.30.30.30:FF:000001">
    <property type="entry name" value="50S ribosomal protein L2"/>
    <property type="match status" value="1"/>
</dbReference>
<dbReference type="FunFam" id="2.40.50.140:FF:000003">
    <property type="entry name" value="50S ribosomal protein L2"/>
    <property type="match status" value="1"/>
</dbReference>
<dbReference type="FunFam" id="4.10.950.10:FF:000001">
    <property type="entry name" value="50S ribosomal protein L2"/>
    <property type="match status" value="1"/>
</dbReference>
<dbReference type="Gene3D" id="2.30.30.30">
    <property type="match status" value="1"/>
</dbReference>
<dbReference type="Gene3D" id="2.40.50.140">
    <property type="entry name" value="Nucleic acid-binding proteins"/>
    <property type="match status" value="1"/>
</dbReference>
<dbReference type="Gene3D" id="4.10.950.10">
    <property type="entry name" value="Ribosomal protein L2, domain 3"/>
    <property type="match status" value="1"/>
</dbReference>
<dbReference type="HAMAP" id="MF_01320_B">
    <property type="entry name" value="Ribosomal_uL2_B"/>
    <property type="match status" value="1"/>
</dbReference>
<dbReference type="InterPro" id="IPR012340">
    <property type="entry name" value="NA-bd_OB-fold"/>
</dbReference>
<dbReference type="InterPro" id="IPR014722">
    <property type="entry name" value="Rib_uL2_dom2"/>
</dbReference>
<dbReference type="InterPro" id="IPR002171">
    <property type="entry name" value="Ribosomal_uL2"/>
</dbReference>
<dbReference type="InterPro" id="IPR005880">
    <property type="entry name" value="Ribosomal_uL2_bac/org-type"/>
</dbReference>
<dbReference type="InterPro" id="IPR022669">
    <property type="entry name" value="Ribosomal_uL2_C"/>
</dbReference>
<dbReference type="InterPro" id="IPR022671">
    <property type="entry name" value="Ribosomal_uL2_CS"/>
</dbReference>
<dbReference type="InterPro" id="IPR014726">
    <property type="entry name" value="Ribosomal_uL2_dom3"/>
</dbReference>
<dbReference type="InterPro" id="IPR022666">
    <property type="entry name" value="Ribosomal_uL2_RNA-bd_dom"/>
</dbReference>
<dbReference type="InterPro" id="IPR008991">
    <property type="entry name" value="Translation_prot_SH3-like_sf"/>
</dbReference>
<dbReference type="NCBIfam" id="TIGR01171">
    <property type="entry name" value="rplB_bact"/>
    <property type="match status" value="1"/>
</dbReference>
<dbReference type="PANTHER" id="PTHR13691:SF5">
    <property type="entry name" value="LARGE RIBOSOMAL SUBUNIT PROTEIN UL2M"/>
    <property type="match status" value="1"/>
</dbReference>
<dbReference type="PANTHER" id="PTHR13691">
    <property type="entry name" value="RIBOSOMAL PROTEIN L2"/>
    <property type="match status" value="1"/>
</dbReference>
<dbReference type="Pfam" id="PF00181">
    <property type="entry name" value="Ribosomal_L2"/>
    <property type="match status" value="1"/>
</dbReference>
<dbReference type="Pfam" id="PF03947">
    <property type="entry name" value="Ribosomal_L2_C"/>
    <property type="match status" value="1"/>
</dbReference>
<dbReference type="PIRSF" id="PIRSF002158">
    <property type="entry name" value="Ribosomal_L2"/>
    <property type="match status" value="1"/>
</dbReference>
<dbReference type="SMART" id="SM01383">
    <property type="entry name" value="Ribosomal_L2"/>
    <property type="match status" value="1"/>
</dbReference>
<dbReference type="SMART" id="SM01382">
    <property type="entry name" value="Ribosomal_L2_C"/>
    <property type="match status" value="1"/>
</dbReference>
<dbReference type="SUPFAM" id="SSF50249">
    <property type="entry name" value="Nucleic acid-binding proteins"/>
    <property type="match status" value="1"/>
</dbReference>
<dbReference type="SUPFAM" id="SSF50104">
    <property type="entry name" value="Translation proteins SH3-like domain"/>
    <property type="match status" value="1"/>
</dbReference>
<dbReference type="PROSITE" id="PS00467">
    <property type="entry name" value="RIBOSOMAL_L2"/>
    <property type="match status" value="1"/>
</dbReference>